<reference key="1">
    <citation type="journal article" date="2007" name="Proc. Natl. Acad. Sci. U.S.A.">
        <title>Genome and proteome of long-chain alkane degrading Geobacillus thermodenitrificans NG80-2 isolated from a deep-subsurface oil reservoir.</title>
        <authorList>
            <person name="Feng L."/>
            <person name="Wang W."/>
            <person name="Cheng J."/>
            <person name="Ren Y."/>
            <person name="Zhao G."/>
            <person name="Gao C."/>
            <person name="Tang Y."/>
            <person name="Liu X."/>
            <person name="Han W."/>
            <person name="Peng X."/>
            <person name="Liu R."/>
            <person name="Wang L."/>
        </authorList>
    </citation>
    <scope>NUCLEOTIDE SEQUENCE [LARGE SCALE GENOMIC DNA]</scope>
    <source>
        <strain>NG80-2</strain>
    </source>
</reference>
<gene>
    <name type="ordered locus">GTNG_3358</name>
</gene>
<dbReference type="EMBL" id="CP000557">
    <property type="protein sequence ID" value="ABO68695.1"/>
    <property type="status" value="ALT_INIT"/>
    <property type="molecule type" value="Genomic_DNA"/>
</dbReference>
<dbReference type="RefSeq" id="WP_008880747.1">
    <property type="nucleotide sequence ID" value="NC_009328.1"/>
</dbReference>
<dbReference type="SMR" id="A4ITP1"/>
<dbReference type="GeneID" id="87622533"/>
<dbReference type="KEGG" id="gtn:GTNG_3358"/>
<dbReference type="eggNOG" id="COG4844">
    <property type="taxonomic scope" value="Bacteria"/>
</dbReference>
<dbReference type="HOGENOM" id="CLU_163820_1_0_9"/>
<dbReference type="Proteomes" id="UP000001578">
    <property type="component" value="Chromosome"/>
</dbReference>
<dbReference type="HAMAP" id="MF_01863">
    <property type="entry name" value="UPF0741"/>
    <property type="match status" value="1"/>
</dbReference>
<dbReference type="InterPro" id="IPR009910">
    <property type="entry name" value="DUF1450"/>
</dbReference>
<dbReference type="InterPro" id="IPR020880">
    <property type="entry name" value="UPF0741"/>
</dbReference>
<dbReference type="Pfam" id="PF07293">
    <property type="entry name" value="DUF1450"/>
    <property type="match status" value="1"/>
</dbReference>
<proteinExistence type="inferred from homology"/>
<comment type="similarity">
    <text evidence="1">Belongs to the UPF0741 family.</text>
</comment>
<comment type="sequence caution" evidence="2">
    <conflict type="erroneous initiation">
        <sequence resource="EMBL-CDS" id="ABO68695"/>
    </conflict>
</comment>
<protein>
    <recommendedName>
        <fullName evidence="1">UPF0741 protein GTNG_3358</fullName>
    </recommendedName>
</protein>
<name>Y3358_GEOTN</name>
<organism>
    <name type="scientific">Geobacillus thermodenitrificans (strain NG80-2)</name>
    <dbReference type="NCBI Taxonomy" id="420246"/>
    <lineage>
        <taxon>Bacteria</taxon>
        <taxon>Bacillati</taxon>
        <taxon>Bacillota</taxon>
        <taxon>Bacilli</taxon>
        <taxon>Bacillales</taxon>
        <taxon>Anoxybacillaceae</taxon>
        <taxon>Geobacillus</taxon>
    </lineage>
</organism>
<accession>A4ITP1</accession>
<sequence>MANEFRVCDDCKAPNLKTLLPRLKKLDPDAVIKIGCQSYCGPGRKKTFAFVNNRPVAALTEDELIDKIAERLKSR</sequence>
<feature type="chain" id="PRO_0000372743" description="UPF0741 protein GTNG_3358">
    <location>
        <begin position="1"/>
        <end position="75"/>
    </location>
</feature>
<evidence type="ECO:0000255" key="1">
    <source>
        <dbReference type="HAMAP-Rule" id="MF_01863"/>
    </source>
</evidence>
<evidence type="ECO:0000305" key="2"/>